<protein>
    <recommendedName>
        <fullName>ATP-dependent RNA helicase fal1</fullName>
        <ecNumber>3.6.4.13</ecNumber>
    </recommendedName>
</protein>
<dbReference type="EC" id="3.6.4.13"/>
<dbReference type="EMBL" id="AM270026">
    <property type="protein sequence ID" value="CAK44387.1"/>
    <property type="status" value="ALT_SEQ"/>
    <property type="molecule type" value="Genomic_DNA"/>
</dbReference>
<dbReference type="RefSeq" id="XP_001400167.2">
    <property type="nucleotide sequence ID" value="XM_001400130.2"/>
</dbReference>
<dbReference type="SMR" id="A5AAE5"/>
<dbReference type="EnsemblFungi" id="CAK44387">
    <property type="protein sequence ID" value="CAK44387"/>
    <property type="gene ID" value="An02g10390"/>
</dbReference>
<dbReference type="OrthoDB" id="12654at5052"/>
<dbReference type="Proteomes" id="UP000006706">
    <property type="component" value="Chromosome 4R"/>
</dbReference>
<dbReference type="GO" id="GO:0030874">
    <property type="term" value="C:nucleolar chromatin"/>
    <property type="evidence" value="ECO:0007669"/>
    <property type="project" value="EnsemblFungi"/>
</dbReference>
<dbReference type="GO" id="GO:0005524">
    <property type="term" value="F:ATP binding"/>
    <property type="evidence" value="ECO:0007669"/>
    <property type="project" value="UniProtKB-KW"/>
</dbReference>
<dbReference type="GO" id="GO:0016887">
    <property type="term" value="F:ATP hydrolysis activity"/>
    <property type="evidence" value="ECO:0007669"/>
    <property type="project" value="RHEA"/>
</dbReference>
<dbReference type="GO" id="GO:0003723">
    <property type="term" value="F:RNA binding"/>
    <property type="evidence" value="ECO:0007669"/>
    <property type="project" value="UniProtKB-KW"/>
</dbReference>
<dbReference type="GO" id="GO:0003724">
    <property type="term" value="F:RNA helicase activity"/>
    <property type="evidence" value="ECO:0007669"/>
    <property type="project" value="UniProtKB-EC"/>
</dbReference>
<dbReference type="GO" id="GO:0006364">
    <property type="term" value="P:rRNA processing"/>
    <property type="evidence" value="ECO:0007669"/>
    <property type="project" value="UniProtKB-KW"/>
</dbReference>
<dbReference type="CDD" id="cd18045">
    <property type="entry name" value="DEADc_EIF4AIII_DDX48"/>
    <property type="match status" value="1"/>
</dbReference>
<dbReference type="CDD" id="cd18787">
    <property type="entry name" value="SF2_C_DEAD"/>
    <property type="match status" value="1"/>
</dbReference>
<dbReference type="FunFam" id="3.40.50.300:FF:000031">
    <property type="entry name" value="Eukaryotic initiation factor 4A-III"/>
    <property type="match status" value="1"/>
</dbReference>
<dbReference type="FunFam" id="3.40.50.300:FF:000498">
    <property type="entry name" value="Eukaryotic initiation factor 4A-III"/>
    <property type="match status" value="1"/>
</dbReference>
<dbReference type="Gene3D" id="3.40.50.300">
    <property type="entry name" value="P-loop containing nucleotide triphosphate hydrolases"/>
    <property type="match status" value="2"/>
</dbReference>
<dbReference type="InterPro" id="IPR011545">
    <property type="entry name" value="DEAD/DEAH_box_helicase_dom"/>
</dbReference>
<dbReference type="InterPro" id="IPR014001">
    <property type="entry name" value="Helicase_ATP-bd"/>
</dbReference>
<dbReference type="InterPro" id="IPR001650">
    <property type="entry name" value="Helicase_C-like"/>
</dbReference>
<dbReference type="InterPro" id="IPR027417">
    <property type="entry name" value="P-loop_NTPase"/>
</dbReference>
<dbReference type="InterPro" id="IPR000629">
    <property type="entry name" value="RNA-helicase_DEAD-box_CS"/>
</dbReference>
<dbReference type="InterPro" id="IPR014014">
    <property type="entry name" value="RNA_helicase_DEAD_Q_motif"/>
</dbReference>
<dbReference type="PANTHER" id="PTHR47958">
    <property type="entry name" value="ATP-DEPENDENT RNA HELICASE DBP3"/>
    <property type="match status" value="1"/>
</dbReference>
<dbReference type="Pfam" id="PF00270">
    <property type="entry name" value="DEAD"/>
    <property type="match status" value="1"/>
</dbReference>
<dbReference type="Pfam" id="PF00271">
    <property type="entry name" value="Helicase_C"/>
    <property type="match status" value="1"/>
</dbReference>
<dbReference type="SMART" id="SM00487">
    <property type="entry name" value="DEXDc"/>
    <property type="match status" value="1"/>
</dbReference>
<dbReference type="SMART" id="SM00490">
    <property type="entry name" value="HELICc"/>
    <property type="match status" value="1"/>
</dbReference>
<dbReference type="SUPFAM" id="SSF52540">
    <property type="entry name" value="P-loop containing nucleoside triphosphate hydrolases"/>
    <property type="match status" value="1"/>
</dbReference>
<dbReference type="PROSITE" id="PS00039">
    <property type="entry name" value="DEAD_ATP_HELICASE"/>
    <property type="match status" value="1"/>
</dbReference>
<dbReference type="PROSITE" id="PS51192">
    <property type="entry name" value="HELICASE_ATP_BIND_1"/>
    <property type="match status" value="1"/>
</dbReference>
<dbReference type="PROSITE" id="PS51194">
    <property type="entry name" value="HELICASE_CTER"/>
    <property type="match status" value="1"/>
</dbReference>
<dbReference type="PROSITE" id="PS51195">
    <property type="entry name" value="Q_MOTIF"/>
    <property type="match status" value="1"/>
</dbReference>
<keyword id="KW-0067">ATP-binding</keyword>
<keyword id="KW-0347">Helicase</keyword>
<keyword id="KW-0378">Hydrolase</keyword>
<keyword id="KW-0547">Nucleotide-binding</keyword>
<keyword id="KW-0539">Nucleus</keyword>
<keyword id="KW-1185">Reference proteome</keyword>
<keyword id="KW-0690">Ribosome biogenesis</keyword>
<keyword id="KW-0694">RNA-binding</keyword>
<keyword id="KW-0698">rRNA processing</keyword>
<evidence type="ECO:0000250" key="1"/>
<evidence type="ECO:0000255" key="2">
    <source>
        <dbReference type="PROSITE-ProRule" id="PRU00541"/>
    </source>
</evidence>
<evidence type="ECO:0000255" key="3">
    <source>
        <dbReference type="PROSITE-ProRule" id="PRU00542"/>
    </source>
</evidence>
<evidence type="ECO:0000305" key="4"/>
<gene>
    <name type="primary">fal1</name>
    <name type="ORF">An02g10390</name>
</gene>
<feature type="chain" id="PRO_0000294607" description="ATP-dependent RNA helicase fal1">
    <location>
        <begin position="1"/>
        <end position="399"/>
    </location>
</feature>
<feature type="domain" description="Helicase ATP-binding" evidence="2">
    <location>
        <begin position="56"/>
        <end position="226"/>
    </location>
</feature>
<feature type="domain" description="Helicase C-terminal" evidence="3">
    <location>
        <begin position="237"/>
        <end position="398"/>
    </location>
</feature>
<feature type="short sequence motif" description="Q motif">
    <location>
        <begin position="25"/>
        <end position="53"/>
    </location>
</feature>
<feature type="short sequence motif" description="DEAD box">
    <location>
        <begin position="174"/>
        <end position="177"/>
    </location>
</feature>
<feature type="binding site" evidence="2">
    <location>
        <begin position="69"/>
        <end position="76"/>
    </location>
    <ligand>
        <name>ATP</name>
        <dbReference type="ChEBI" id="CHEBI:30616"/>
    </ligand>
</feature>
<proteinExistence type="inferred from homology"/>
<organism>
    <name type="scientific">Aspergillus niger (strain ATCC MYA-4892 / CBS 513.88 / FGSC A1513)</name>
    <dbReference type="NCBI Taxonomy" id="425011"/>
    <lineage>
        <taxon>Eukaryota</taxon>
        <taxon>Fungi</taxon>
        <taxon>Dikarya</taxon>
        <taxon>Ascomycota</taxon>
        <taxon>Pezizomycotina</taxon>
        <taxon>Eurotiomycetes</taxon>
        <taxon>Eurotiomycetidae</taxon>
        <taxon>Eurotiales</taxon>
        <taxon>Aspergillaceae</taxon>
        <taxon>Aspergillus</taxon>
        <taxon>Aspergillus subgen. Circumdati</taxon>
    </lineage>
</organism>
<name>FAL1_ASPNC</name>
<reference key="1">
    <citation type="journal article" date="2007" name="Nat. Biotechnol.">
        <title>Genome sequencing and analysis of the versatile cell factory Aspergillus niger CBS 513.88.</title>
        <authorList>
            <person name="Pel H.J."/>
            <person name="de Winde J.H."/>
            <person name="Archer D.B."/>
            <person name="Dyer P.S."/>
            <person name="Hofmann G."/>
            <person name="Schaap P.J."/>
            <person name="Turner G."/>
            <person name="de Vries R.P."/>
            <person name="Albang R."/>
            <person name="Albermann K."/>
            <person name="Andersen M.R."/>
            <person name="Bendtsen J.D."/>
            <person name="Benen J.A.E."/>
            <person name="van den Berg M."/>
            <person name="Breestraat S."/>
            <person name="Caddick M.X."/>
            <person name="Contreras R."/>
            <person name="Cornell M."/>
            <person name="Coutinho P.M."/>
            <person name="Danchin E.G.J."/>
            <person name="Debets A.J.M."/>
            <person name="Dekker P."/>
            <person name="van Dijck P.W.M."/>
            <person name="van Dijk A."/>
            <person name="Dijkhuizen L."/>
            <person name="Driessen A.J.M."/>
            <person name="d'Enfert C."/>
            <person name="Geysens S."/>
            <person name="Goosen C."/>
            <person name="Groot G.S.P."/>
            <person name="de Groot P.W.J."/>
            <person name="Guillemette T."/>
            <person name="Henrissat B."/>
            <person name="Herweijer M."/>
            <person name="van den Hombergh J.P.T.W."/>
            <person name="van den Hondel C.A.M.J.J."/>
            <person name="van der Heijden R.T.J.M."/>
            <person name="van der Kaaij R.M."/>
            <person name="Klis F.M."/>
            <person name="Kools H.J."/>
            <person name="Kubicek C.P."/>
            <person name="van Kuyk P.A."/>
            <person name="Lauber J."/>
            <person name="Lu X."/>
            <person name="van der Maarel M.J.E.C."/>
            <person name="Meulenberg R."/>
            <person name="Menke H."/>
            <person name="Mortimer M.A."/>
            <person name="Nielsen J."/>
            <person name="Oliver S.G."/>
            <person name="Olsthoorn M."/>
            <person name="Pal K."/>
            <person name="van Peij N.N.M.E."/>
            <person name="Ram A.F.J."/>
            <person name="Rinas U."/>
            <person name="Roubos J.A."/>
            <person name="Sagt C.M.J."/>
            <person name="Schmoll M."/>
            <person name="Sun J."/>
            <person name="Ussery D."/>
            <person name="Varga J."/>
            <person name="Vervecken W."/>
            <person name="van de Vondervoort P.J.J."/>
            <person name="Wedler H."/>
            <person name="Woesten H.A.B."/>
            <person name="Zeng A.-P."/>
            <person name="van Ooyen A.J.J."/>
            <person name="Visser J."/>
            <person name="Stam H."/>
        </authorList>
    </citation>
    <scope>NUCLEOTIDE SEQUENCE [LARGE SCALE GENOMIC DNA]</scope>
    <source>
        <strain>ATCC MYA-4892 / CBS 513.88 / FGSC A1513</strain>
    </source>
</reference>
<comment type="function">
    <text evidence="1">ATP-dependent RNA helicase involved in 40S ribosomal subunit biogenesis. Required for the processing and cleavage of 35S pre-rRNA at sites A0, A1, and A2, leading to mature 18S rRNA (By similarity).</text>
</comment>
<comment type="catalytic activity">
    <reaction>
        <text>ATP + H2O = ADP + phosphate + H(+)</text>
        <dbReference type="Rhea" id="RHEA:13065"/>
        <dbReference type="ChEBI" id="CHEBI:15377"/>
        <dbReference type="ChEBI" id="CHEBI:15378"/>
        <dbReference type="ChEBI" id="CHEBI:30616"/>
        <dbReference type="ChEBI" id="CHEBI:43474"/>
        <dbReference type="ChEBI" id="CHEBI:456216"/>
        <dbReference type="EC" id="3.6.4.13"/>
    </reaction>
</comment>
<comment type="subcellular location">
    <subcellularLocation>
        <location evidence="1">Nucleus</location>
        <location evidence="1">Nucleolus</location>
    </subcellularLocation>
</comment>
<comment type="domain">
    <text>The Q motif is unique to and characteristic of the DEAD box family of RNA helicases and controls ATP binding and hydrolysis.</text>
</comment>
<comment type="similarity">
    <text evidence="4">Belongs to the DEAD box helicase family. DDX48/FAL1 subfamily.</text>
</comment>
<comment type="sequence caution" evidence="4">
    <conflict type="erroneous gene model prediction">
        <sequence resource="EMBL-CDS" id="CAK44387"/>
    </conflict>
</comment>
<accession>A5AAE5</accession>
<sequence>MADGIDRRADDRMEFNTSKEVTVAPTFEDMHLKESLLRGIYAYGYESPSAVQSRAIVQICKGRDTIAQAQSGTGKTATFSISILQVIDTVVRESQALVLSPTRELATQIQSVIMALGDYMNVQCHACIGGTNIGEDIRKLDYGQHVVSGTPGRVADMIRRRHLRTRHIKMLVLDEADELLNRGFREQIYDVYRYLPPATQVVVVSATLPYDVLDMTTKFMTDPVRVLVKRDELTLEGIKQYFIAVEKEEWKFDTLCDLYDTLTITQAVIFCNTRRKVDWLTDKMREANFTVSSMHGEMPQKERDSIMQDFRQGNSRVLISTDVWARGIDVQQVSLVINYDLPTNRENYIHRIGRSGRFGRKGVAINFVTSDDVRILRDIELYYSTQIDEMPMNVADLLS</sequence>